<feature type="chain" id="PRO_0000243718" description="Large ribosomal subunit protein bL20">
    <location>
        <begin position="1"/>
        <end position="118"/>
    </location>
</feature>
<comment type="function">
    <text evidence="1">Binds directly to 23S ribosomal RNA and is necessary for the in vitro assembly process of the 50S ribosomal subunit. It is not involved in the protein synthesizing functions of that subunit.</text>
</comment>
<comment type="similarity">
    <text evidence="1">Belongs to the bacterial ribosomal protein bL20 family.</text>
</comment>
<name>RL20_PSEU2</name>
<reference key="1">
    <citation type="journal article" date="2005" name="Proc. Natl. Acad. Sci. U.S.A.">
        <title>Comparison of the complete genome sequences of Pseudomonas syringae pv. syringae B728a and pv. tomato DC3000.</title>
        <authorList>
            <person name="Feil H."/>
            <person name="Feil W.S."/>
            <person name="Chain P."/>
            <person name="Larimer F."/>
            <person name="Dibartolo G."/>
            <person name="Copeland A."/>
            <person name="Lykidis A."/>
            <person name="Trong S."/>
            <person name="Nolan M."/>
            <person name="Goltsman E."/>
            <person name="Thiel J."/>
            <person name="Malfatti S."/>
            <person name="Loper J.E."/>
            <person name="Lapidus A."/>
            <person name="Detter J.C."/>
            <person name="Land M."/>
            <person name="Richardson P.M."/>
            <person name="Kyrpides N.C."/>
            <person name="Ivanova N."/>
            <person name="Lindow S.E."/>
        </authorList>
    </citation>
    <scope>NUCLEOTIDE SEQUENCE [LARGE SCALE GENOMIC DNA]</scope>
    <source>
        <strain>B728a</strain>
    </source>
</reference>
<keyword id="KW-0687">Ribonucleoprotein</keyword>
<keyword id="KW-0689">Ribosomal protein</keyword>
<keyword id="KW-0694">RNA-binding</keyword>
<keyword id="KW-0699">rRNA-binding</keyword>
<dbReference type="EMBL" id="CP000075">
    <property type="protein sequence ID" value="AAY37208.1"/>
    <property type="molecule type" value="Genomic_DNA"/>
</dbReference>
<dbReference type="RefSeq" id="WP_002553161.1">
    <property type="nucleotide sequence ID" value="NC_007005.1"/>
</dbReference>
<dbReference type="RefSeq" id="YP_235246.1">
    <property type="nucleotide sequence ID" value="NC_007005.1"/>
</dbReference>
<dbReference type="SMR" id="Q4ZUG4"/>
<dbReference type="STRING" id="205918.Psyr_2165"/>
<dbReference type="GeneID" id="98112258"/>
<dbReference type="KEGG" id="psb:Psyr_2165"/>
<dbReference type="PATRIC" id="fig|205918.7.peg.2215"/>
<dbReference type="eggNOG" id="COG0292">
    <property type="taxonomic scope" value="Bacteria"/>
</dbReference>
<dbReference type="HOGENOM" id="CLU_123265_0_1_6"/>
<dbReference type="OrthoDB" id="9808966at2"/>
<dbReference type="PRO" id="PR:Q4ZUG4"/>
<dbReference type="Proteomes" id="UP000000426">
    <property type="component" value="Chromosome"/>
</dbReference>
<dbReference type="GO" id="GO:1990904">
    <property type="term" value="C:ribonucleoprotein complex"/>
    <property type="evidence" value="ECO:0007669"/>
    <property type="project" value="UniProtKB-KW"/>
</dbReference>
<dbReference type="GO" id="GO:0005840">
    <property type="term" value="C:ribosome"/>
    <property type="evidence" value="ECO:0007669"/>
    <property type="project" value="UniProtKB-KW"/>
</dbReference>
<dbReference type="GO" id="GO:0019843">
    <property type="term" value="F:rRNA binding"/>
    <property type="evidence" value="ECO:0007669"/>
    <property type="project" value="UniProtKB-UniRule"/>
</dbReference>
<dbReference type="GO" id="GO:0003735">
    <property type="term" value="F:structural constituent of ribosome"/>
    <property type="evidence" value="ECO:0007669"/>
    <property type="project" value="InterPro"/>
</dbReference>
<dbReference type="GO" id="GO:0000027">
    <property type="term" value="P:ribosomal large subunit assembly"/>
    <property type="evidence" value="ECO:0007669"/>
    <property type="project" value="UniProtKB-UniRule"/>
</dbReference>
<dbReference type="GO" id="GO:0006412">
    <property type="term" value="P:translation"/>
    <property type="evidence" value="ECO:0007669"/>
    <property type="project" value="InterPro"/>
</dbReference>
<dbReference type="CDD" id="cd07026">
    <property type="entry name" value="Ribosomal_L20"/>
    <property type="match status" value="1"/>
</dbReference>
<dbReference type="FunFam" id="1.10.1900.20:FF:000001">
    <property type="entry name" value="50S ribosomal protein L20"/>
    <property type="match status" value="1"/>
</dbReference>
<dbReference type="Gene3D" id="6.10.160.10">
    <property type="match status" value="1"/>
</dbReference>
<dbReference type="Gene3D" id="1.10.1900.20">
    <property type="entry name" value="Ribosomal protein L20"/>
    <property type="match status" value="1"/>
</dbReference>
<dbReference type="HAMAP" id="MF_00382">
    <property type="entry name" value="Ribosomal_bL20"/>
    <property type="match status" value="1"/>
</dbReference>
<dbReference type="InterPro" id="IPR005813">
    <property type="entry name" value="Ribosomal_bL20"/>
</dbReference>
<dbReference type="InterPro" id="IPR049946">
    <property type="entry name" value="RIBOSOMAL_L20_CS"/>
</dbReference>
<dbReference type="InterPro" id="IPR035566">
    <property type="entry name" value="Ribosomal_protein_bL20_C"/>
</dbReference>
<dbReference type="NCBIfam" id="TIGR01032">
    <property type="entry name" value="rplT_bact"/>
    <property type="match status" value="1"/>
</dbReference>
<dbReference type="PANTHER" id="PTHR10986">
    <property type="entry name" value="39S RIBOSOMAL PROTEIN L20"/>
    <property type="match status" value="1"/>
</dbReference>
<dbReference type="Pfam" id="PF00453">
    <property type="entry name" value="Ribosomal_L20"/>
    <property type="match status" value="1"/>
</dbReference>
<dbReference type="PRINTS" id="PR00062">
    <property type="entry name" value="RIBOSOMALL20"/>
</dbReference>
<dbReference type="SUPFAM" id="SSF74731">
    <property type="entry name" value="Ribosomal protein L20"/>
    <property type="match status" value="1"/>
</dbReference>
<dbReference type="PROSITE" id="PS00937">
    <property type="entry name" value="RIBOSOMAL_L20"/>
    <property type="match status" value="1"/>
</dbReference>
<proteinExistence type="inferred from homology"/>
<sequence>MARVKRGVIARKRHKKILKLAKGYYGARSRVFRVAKQAVIKAGQYAYRDRRQKKRQFRALWIARINAGARVNGLSYSRFIAGLKKASIEIDRKVLADLAVNEKAAFAAIVEKAKATLA</sequence>
<organism>
    <name type="scientific">Pseudomonas syringae pv. syringae (strain B728a)</name>
    <dbReference type="NCBI Taxonomy" id="205918"/>
    <lineage>
        <taxon>Bacteria</taxon>
        <taxon>Pseudomonadati</taxon>
        <taxon>Pseudomonadota</taxon>
        <taxon>Gammaproteobacteria</taxon>
        <taxon>Pseudomonadales</taxon>
        <taxon>Pseudomonadaceae</taxon>
        <taxon>Pseudomonas</taxon>
        <taxon>Pseudomonas syringae</taxon>
    </lineage>
</organism>
<evidence type="ECO:0000255" key="1">
    <source>
        <dbReference type="HAMAP-Rule" id="MF_00382"/>
    </source>
</evidence>
<evidence type="ECO:0000305" key="2"/>
<gene>
    <name evidence="1" type="primary">rplT</name>
    <name type="ordered locus">Psyr_2165</name>
</gene>
<protein>
    <recommendedName>
        <fullName evidence="1">Large ribosomal subunit protein bL20</fullName>
    </recommendedName>
    <alternativeName>
        <fullName evidence="2">50S ribosomal protein L20</fullName>
    </alternativeName>
</protein>
<accession>Q4ZUG4</accession>